<accession>Q635D0</accession>
<sequence>MINFNFFMNDVVRQAREEIVSAGYTELTTPEAVDEAFKRNGTTLVMVNSVCGCAGGIARPAAAHSVHYDKRPNHLVTVFAGQDKEATARAREYFEGYPPSSPSFALLKDGKIVTMVERHEIEGHEPMQVIAKLQSYFEENCEEL</sequence>
<feature type="chain" id="PRO_0000271980" description="Bacilliredoxin BCE33L3907">
    <location>
        <begin position="1"/>
        <end position="144"/>
    </location>
</feature>
<evidence type="ECO:0000305" key="1"/>
<gene>
    <name type="ordered locus">BCE33L3907</name>
</gene>
<dbReference type="EMBL" id="CP000001">
    <property type="protein sequence ID" value="AAU16362.1"/>
    <property type="molecule type" value="Genomic_DNA"/>
</dbReference>
<dbReference type="SMR" id="Q635D0"/>
<dbReference type="KEGG" id="bcz:BCE33L3907"/>
<dbReference type="PATRIC" id="fig|288681.22.peg.1492"/>
<dbReference type="Proteomes" id="UP000002612">
    <property type="component" value="Chromosome"/>
</dbReference>
<dbReference type="GO" id="GO:0045454">
    <property type="term" value="P:cell redox homeostasis"/>
    <property type="evidence" value="ECO:0000250"/>
    <property type="project" value="UniProtKB"/>
</dbReference>
<dbReference type="Gene3D" id="3.40.30.10">
    <property type="entry name" value="Glutaredoxin"/>
    <property type="match status" value="1"/>
</dbReference>
<dbReference type="InterPro" id="IPR009474">
    <property type="entry name" value="BrxB/BrxA"/>
</dbReference>
<dbReference type="NCBIfam" id="TIGR04191">
    <property type="entry name" value="YphP_YqiW"/>
    <property type="match status" value="1"/>
</dbReference>
<dbReference type="PANTHER" id="PTHR40052:SF1">
    <property type="entry name" value="BACILLIREDOXIN BRXB"/>
    <property type="match status" value="1"/>
</dbReference>
<dbReference type="PANTHER" id="PTHR40052">
    <property type="entry name" value="UPF0403 PROTEIN YQIW-RELATED"/>
    <property type="match status" value="1"/>
</dbReference>
<dbReference type="Pfam" id="PF06491">
    <property type="entry name" value="Disulph_isomer"/>
    <property type="match status" value="1"/>
</dbReference>
<organism>
    <name type="scientific">Bacillus cereus (strain ZK / E33L)</name>
    <dbReference type="NCBI Taxonomy" id="288681"/>
    <lineage>
        <taxon>Bacteria</taxon>
        <taxon>Bacillati</taxon>
        <taxon>Bacillota</taxon>
        <taxon>Bacilli</taxon>
        <taxon>Bacillales</taxon>
        <taxon>Bacillaceae</taxon>
        <taxon>Bacillus</taxon>
        <taxon>Bacillus cereus group</taxon>
    </lineage>
</organism>
<protein>
    <recommendedName>
        <fullName evidence="1">Bacilliredoxin BCE33L3907</fullName>
    </recommendedName>
</protein>
<comment type="similarity">
    <text evidence="1">Belongs to the bacilliredoxin family.</text>
</comment>
<reference key="1">
    <citation type="journal article" date="2006" name="J. Bacteriol.">
        <title>Pathogenomic sequence analysis of Bacillus cereus and Bacillus thuringiensis isolates closely related to Bacillus anthracis.</title>
        <authorList>
            <person name="Han C.S."/>
            <person name="Xie G."/>
            <person name="Challacombe J.F."/>
            <person name="Altherr M.R."/>
            <person name="Bhotika S.S."/>
            <person name="Bruce D."/>
            <person name="Campbell C.S."/>
            <person name="Campbell M.L."/>
            <person name="Chen J."/>
            <person name="Chertkov O."/>
            <person name="Cleland C."/>
            <person name="Dimitrijevic M."/>
            <person name="Doggett N.A."/>
            <person name="Fawcett J.J."/>
            <person name="Glavina T."/>
            <person name="Goodwin L.A."/>
            <person name="Hill K.K."/>
            <person name="Hitchcock P."/>
            <person name="Jackson P.J."/>
            <person name="Keim P."/>
            <person name="Kewalramani A.R."/>
            <person name="Longmire J."/>
            <person name="Lucas S."/>
            <person name="Malfatti S."/>
            <person name="McMurry K."/>
            <person name="Meincke L.J."/>
            <person name="Misra M."/>
            <person name="Moseman B.L."/>
            <person name="Mundt M."/>
            <person name="Munk A.C."/>
            <person name="Okinaka R.T."/>
            <person name="Parson-Quintana B."/>
            <person name="Reilly L.P."/>
            <person name="Richardson P."/>
            <person name="Robinson D.L."/>
            <person name="Rubin E."/>
            <person name="Saunders E."/>
            <person name="Tapia R."/>
            <person name="Tesmer J.G."/>
            <person name="Thayer N."/>
            <person name="Thompson L.S."/>
            <person name="Tice H."/>
            <person name="Ticknor L.O."/>
            <person name="Wills P.L."/>
            <person name="Brettin T.S."/>
            <person name="Gilna P."/>
        </authorList>
    </citation>
    <scope>NUCLEOTIDE SEQUENCE [LARGE SCALE GENOMIC DNA]</scope>
    <source>
        <strain>ZK / E33L</strain>
    </source>
</reference>
<name>Y3907_BACCZ</name>
<proteinExistence type="inferred from homology"/>